<comment type="function">
    <text evidence="1">Catalyzes the reduction of the double bond of an array of alpha,beta-unsaturated aldehydes and ketones. It also reduces the nitro group of nitroester and nitroaromatic compounds. It could have a role in detoxification processes.</text>
</comment>
<comment type="catalytic activity">
    <reaction evidence="1">
        <text>A + NADPH + H(+) = AH2 + NADP(+)</text>
        <dbReference type="Rhea" id="RHEA:13149"/>
        <dbReference type="ChEBI" id="CHEBI:13193"/>
        <dbReference type="ChEBI" id="CHEBI:15378"/>
        <dbReference type="ChEBI" id="CHEBI:17499"/>
        <dbReference type="ChEBI" id="CHEBI:57783"/>
        <dbReference type="ChEBI" id="CHEBI:58349"/>
        <dbReference type="EC" id="1.6.99.1"/>
    </reaction>
</comment>
<comment type="cofactor">
    <cofactor evidence="1">
        <name>FMN</name>
        <dbReference type="ChEBI" id="CHEBI:58210"/>
    </cofactor>
</comment>
<comment type="activity regulation">
    <text>Inhibited by p-hydroxybenzaldehyde (pHBA) and p-nitrophenol (pNP).</text>
</comment>
<comment type="biophysicochemical properties">
    <kinetics>
        <KM evidence="1">19 uM for duroquinone</KM>
        <KM evidence="1">109 uM for nitroglycerin</KM>
        <KM evidence="1">293 uM for cyclohex-2-enone</KM>
        <KM evidence="1">705 uM for 2,4,6-trinitrotoluene</KM>
        <KM evidence="1">841 uM for menadione</KM>
        <KM evidence="1">2602 uM for trans-hex-2-enal</KM>
        <text>The highest catalytic efficiency was observed with N-ethylmaleimide for which the KM is inferior to 1.0 uM.</text>
    </kinetics>
</comment>
<comment type="subunit">
    <text evidence="1 2">Homotetramer. Composed of a dimer of active dimers.</text>
</comment>
<comment type="induction">
    <text evidence="1">By toxic xenobiotic compounds (2,4,6-trinitrotoluene and nitroglycerin), and in response to oxidative stress (hydrogen peroxide and paraquat).</text>
</comment>
<comment type="miscellaneous">
    <text>Forms a charge transfer complex with a variety of phenolic compounds.</text>
</comment>
<comment type="similarity">
    <text evidence="3">Belongs to the NADH:flavin oxidoreductase/NADH oxidase family. NamA subfamily.</text>
</comment>
<protein>
    <recommendedName>
        <fullName>NADPH dehydrogenase</fullName>
        <ecNumber evidence="1">1.6.99.1</ecNumber>
    </recommendedName>
    <alternativeName>
        <fullName>Xenobiotic reductase</fullName>
    </alternativeName>
</protein>
<name>NAMA_BACSU</name>
<feature type="initiator methionine" description="Removed" evidence="1">
    <location>
        <position position="1"/>
    </location>
</feature>
<feature type="chain" id="PRO_0000216119" description="NADPH dehydrogenase">
    <location>
        <begin position="2"/>
        <end position="338"/>
    </location>
</feature>
<feature type="binding site" evidence="2">
    <location>
        <begin position="23"/>
        <end position="26"/>
    </location>
    <ligand>
        <name>FMN</name>
        <dbReference type="ChEBI" id="CHEBI:58210"/>
    </ligand>
</feature>
<feature type="binding site" evidence="2">
    <location>
        <position position="28"/>
    </location>
    <ligand>
        <name>substrate</name>
    </ligand>
</feature>
<feature type="binding site" evidence="2">
    <location>
        <position position="60"/>
    </location>
    <ligand>
        <name>FMN</name>
        <dbReference type="ChEBI" id="CHEBI:58210"/>
    </ligand>
</feature>
<feature type="binding site" evidence="2">
    <location>
        <position position="102"/>
    </location>
    <ligand>
        <name>FMN</name>
        <dbReference type="ChEBI" id="CHEBI:58210"/>
    </ligand>
</feature>
<feature type="binding site" evidence="2">
    <location>
        <begin position="164"/>
        <end position="167"/>
    </location>
    <ligand>
        <name>substrate</name>
    </ligand>
</feature>
<feature type="binding site" evidence="2">
    <location>
        <position position="215"/>
    </location>
    <ligand>
        <name>FMN</name>
        <dbReference type="ChEBI" id="CHEBI:58210"/>
    </ligand>
</feature>
<feature type="binding site" evidence="2">
    <location>
        <begin position="307"/>
        <end position="308"/>
    </location>
    <ligand>
        <name>FMN</name>
        <dbReference type="ChEBI" id="CHEBI:58210"/>
    </ligand>
</feature>
<feature type="helix" evidence="4">
    <location>
        <begin position="4"/>
        <end position="6"/>
    </location>
</feature>
<feature type="strand" evidence="4">
    <location>
        <begin position="9"/>
        <end position="11"/>
    </location>
</feature>
<feature type="strand" evidence="4">
    <location>
        <begin position="14"/>
        <end position="22"/>
    </location>
</feature>
<feature type="strand" evidence="4">
    <location>
        <begin position="33"/>
        <end position="35"/>
    </location>
</feature>
<feature type="helix" evidence="4">
    <location>
        <begin position="39"/>
        <end position="50"/>
    </location>
</feature>
<feature type="strand" evidence="4">
    <location>
        <begin position="54"/>
        <end position="64"/>
    </location>
</feature>
<feature type="helix" evidence="4">
    <location>
        <begin position="65"/>
        <end position="67"/>
    </location>
</feature>
<feature type="strand" evidence="5">
    <location>
        <begin position="73"/>
        <end position="75"/>
    </location>
</feature>
<feature type="helix" evidence="4">
    <location>
        <begin position="79"/>
        <end position="81"/>
    </location>
</feature>
<feature type="helix" evidence="4">
    <location>
        <begin position="82"/>
        <end position="94"/>
    </location>
</feature>
<feature type="strand" evidence="4">
    <location>
        <begin position="98"/>
        <end position="104"/>
    </location>
</feature>
<feature type="helix" evidence="4">
    <location>
        <begin position="107"/>
        <end position="109"/>
    </location>
</feature>
<feature type="strand" evidence="4">
    <location>
        <begin position="117"/>
        <end position="121"/>
    </location>
</feature>
<feature type="helix" evidence="4">
    <location>
        <begin position="136"/>
        <end position="155"/>
    </location>
</feature>
<feature type="strand" evidence="4">
    <location>
        <begin position="159"/>
        <end position="165"/>
    </location>
</feature>
<feature type="helix" evidence="4">
    <location>
        <begin position="170"/>
        <end position="175"/>
    </location>
</feature>
<feature type="turn" evidence="4">
    <location>
        <begin position="177"/>
        <end position="179"/>
    </location>
</feature>
<feature type="strand" evidence="4">
    <location>
        <begin position="187"/>
        <end position="189"/>
    </location>
</feature>
<feature type="helix" evidence="4">
    <location>
        <begin position="190"/>
        <end position="207"/>
    </location>
</feature>
<feature type="strand" evidence="4">
    <location>
        <begin position="212"/>
        <end position="217"/>
    </location>
</feature>
<feature type="helix" evidence="4">
    <location>
        <begin position="228"/>
        <end position="240"/>
    </location>
</feature>
<feature type="strand" evidence="4">
    <location>
        <begin position="245"/>
        <end position="249"/>
    </location>
</feature>
<feature type="turn" evidence="4">
    <location>
        <begin position="262"/>
        <end position="265"/>
    </location>
</feature>
<feature type="helix" evidence="4">
    <location>
        <begin position="266"/>
        <end position="276"/>
    </location>
</feature>
<feature type="strand" evidence="4">
    <location>
        <begin position="279"/>
        <end position="282"/>
    </location>
</feature>
<feature type="helix" evidence="4">
    <location>
        <begin position="289"/>
        <end position="297"/>
    </location>
</feature>
<feature type="strand" evidence="4">
    <location>
        <begin position="302"/>
        <end position="306"/>
    </location>
</feature>
<feature type="helix" evidence="4">
    <location>
        <begin position="308"/>
        <end position="312"/>
    </location>
</feature>
<feature type="helix" evidence="4">
    <location>
        <begin position="316"/>
        <end position="323"/>
    </location>
</feature>
<feature type="helix" evidence="4">
    <location>
        <begin position="332"/>
        <end position="334"/>
    </location>
</feature>
<feature type="turn" evidence="4">
    <location>
        <begin position="335"/>
        <end position="337"/>
    </location>
</feature>
<dbReference type="EC" id="1.6.99.1" evidence="1"/>
<dbReference type="EMBL" id="D84432">
    <property type="protein sequence ID" value="BAA12619.1"/>
    <property type="molecule type" value="Genomic_DNA"/>
</dbReference>
<dbReference type="EMBL" id="AL009126">
    <property type="protein sequence ID" value="CAB14314.1"/>
    <property type="molecule type" value="Genomic_DNA"/>
</dbReference>
<dbReference type="PIR" id="E69964">
    <property type="entry name" value="E69964"/>
</dbReference>
<dbReference type="RefSeq" id="NP_390263.1">
    <property type="nucleotide sequence ID" value="NC_000964.3"/>
</dbReference>
<dbReference type="RefSeq" id="WP_003230377.1">
    <property type="nucleotide sequence ID" value="NZ_OZ025638.1"/>
</dbReference>
<dbReference type="PDB" id="1Z41">
    <property type="method" value="X-ray"/>
    <property type="resolution" value="1.30 A"/>
    <property type="chains" value="A/B=1-338"/>
</dbReference>
<dbReference type="PDB" id="1Z42">
    <property type="method" value="X-ray"/>
    <property type="resolution" value="1.85 A"/>
    <property type="chains" value="A/B=1-338"/>
</dbReference>
<dbReference type="PDB" id="1Z44">
    <property type="method" value="X-ray"/>
    <property type="resolution" value="1.40 A"/>
    <property type="chains" value="A/B=1-338"/>
</dbReference>
<dbReference type="PDB" id="1Z48">
    <property type="method" value="X-ray"/>
    <property type="resolution" value="1.80 A"/>
    <property type="chains" value="A/B=1-338"/>
</dbReference>
<dbReference type="PDBsum" id="1Z41"/>
<dbReference type="PDBsum" id="1Z42"/>
<dbReference type="PDBsum" id="1Z44"/>
<dbReference type="PDBsum" id="1Z48"/>
<dbReference type="SMR" id="P54550"/>
<dbReference type="FunCoup" id="P54550">
    <property type="interactions" value="266"/>
</dbReference>
<dbReference type="STRING" id="224308.BSU23820"/>
<dbReference type="PaxDb" id="224308-BSU23820"/>
<dbReference type="EnsemblBacteria" id="CAB14314">
    <property type="protein sequence ID" value="CAB14314"/>
    <property type="gene ID" value="BSU_23820"/>
</dbReference>
<dbReference type="GeneID" id="938698"/>
<dbReference type="KEGG" id="bsu:BSU23820"/>
<dbReference type="PATRIC" id="fig|224308.179.peg.2595"/>
<dbReference type="eggNOG" id="COG1902">
    <property type="taxonomic scope" value="Bacteria"/>
</dbReference>
<dbReference type="InParanoid" id="P54550"/>
<dbReference type="OrthoDB" id="9772736at2"/>
<dbReference type="PhylomeDB" id="P54550"/>
<dbReference type="BioCyc" id="BSUB:BSU23820-MONOMER"/>
<dbReference type="SABIO-RK" id="P54550"/>
<dbReference type="EvolutionaryTrace" id="P54550"/>
<dbReference type="Proteomes" id="UP000001570">
    <property type="component" value="Chromosome"/>
</dbReference>
<dbReference type="GO" id="GO:0010181">
    <property type="term" value="F:FMN binding"/>
    <property type="evidence" value="ECO:0007669"/>
    <property type="project" value="UniProtKB-UniRule"/>
</dbReference>
<dbReference type="GO" id="GO:0050661">
    <property type="term" value="F:NADP binding"/>
    <property type="evidence" value="ECO:0007669"/>
    <property type="project" value="UniProtKB-UniRule"/>
</dbReference>
<dbReference type="GO" id="GO:0003959">
    <property type="term" value="F:NADPH dehydrogenase activity"/>
    <property type="evidence" value="ECO:0007669"/>
    <property type="project" value="UniProtKB-UniRule"/>
</dbReference>
<dbReference type="GO" id="GO:0009636">
    <property type="term" value="P:response to toxic substance"/>
    <property type="evidence" value="ECO:0007669"/>
    <property type="project" value="UniProtKB-KW"/>
</dbReference>
<dbReference type="CDD" id="cd02932">
    <property type="entry name" value="OYE_YqiM_FMN"/>
    <property type="match status" value="1"/>
</dbReference>
<dbReference type="Gene3D" id="3.20.20.70">
    <property type="entry name" value="Aldolase class I"/>
    <property type="match status" value="1"/>
</dbReference>
<dbReference type="HAMAP" id="MF_01614">
    <property type="entry name" value="NamA"/>
    <property type="match status" value="1"/>
</dbReference>
<dbReference type="InterPro" id="IPR013785">
    <property type="entry name" value="Aldolase_TIM"/>
</dbReference>
<dbReference type="InterPro" id="IPR023663">
    <property type="entry name" value="NADPH_DH_bac"/>
</dbReference>
<dbReference type="InterPro" id="IPR001155">
    <property type="entry name" value="OxRdtase_FMN_N"/>
</dbReference>
<dbReference type="InterPro" id="IPR044152">
    <property type="entry name" value="YqjM-like"/>
</dbReference>
<dbReference type="NCBIfam" id="NF010047">
    <property type="entry name" value="PRK13523.1"/>
    <property type="match status" value="1"/>
</dbReference>
<dbReference type="PANTHER" id="PTHR43303">
    <property type="entry name" value="NADPH DEHYDROGENASE C23G7.10C-RELATED"/>
    <property type="match status" value="1"/>
</dbReference>
<dbReference type="PANTHER" id="PTHR43303:SF4">
    <property type="entry name" value="NADPH DEHYDROGENASE C23G7.10C-RELATED"/>
    <property type="match status" value="1"/>
</dbReference>
<dbReference type="Pfam" id="PF00724">
    <property type="entry name" value="Oxidored_FMN"/>
    <property type="match status" value="1"/>
</dbReference>
<dbReference type="SUPFAM" id="SSF51395">
    <property type="entry name" value="FMN-linked oxidoreductases"/>
    <property type="match status" value="1"/>
</dbReference>
<reference key="1">
    <citation type="journal article" date="1996" name="Microbiology">
        <title>Systematic sequencing of the 283 kb 210 degrees-232 degrees region of the Bacillus subtilis genome containing the skin element and many sporulation genes.</title>
        <authorList>
            <person name="Mizuno M."/>
            <person name="Masuda S."/>
            <person name="Takemaru K."/>
            <person name="Hosono S."/>
            <person name="Sato T."/>
            <person name="Takeuchi M."/>
            <person name="Kobayashi Y."/>
        </authorList>
    </citation>
    <scope>NUCLEOTIDE SEQUENCE [GENOMIC DNA]</scope>
    <source>
        <strain>168 / JH642</strain>
    </source>
</reference>
<reference key="2">
    <citation type="journal article" date="1997" name="Nature">
        <title>The complete genome sequence of the Gram-positive bacterium Bacillus subtilis.</title>
        <authorList>
            <person name="Kunst F."/>
            <person name="Ogasawara N."/>
            <person name="Moszer I."/>
            <person name="Albertini A.M."/>
            <person name="Alloni G."/>
            <person name="Azevedo V."/>
            <person name="Bertero M.G."/>
            <person name="Bessieres P."/>
            <person name="Bolotin A."/>
            <person name="Borchert S."/>
            <person name="Borriss R."/>
            <person name="Boursier L."/>
            <person name="Brans A."/>
            <person name="Braun M."/>
            <person name="Brignell S.C."/>
            <person name="Bron S."/>
            <person name="Brouillet S."/>
            <person name="Bruschi C.V."/>
            <person name="Caldwell B."/>
            <person name="Capuano V."/>
            <person name="Carter N.M."/>
            <person name="Choi S.-K."/>
            <person name="Codani J.-J."/>
            <person name="Connerton I.F."/>
            <person name="Cummings N.J."/>
            <person name="Daniel R.A."/>
            <person name="Denizot F."/>
            <person name="Devine K.M."/>
            <person name="Duesterhoeft A."/>
            <person name="Ehrlich S.D."/>
            <person name="Emmerson P.T."/>
            <person name="Entian K.-D."/>
            <person name="Errington J."/>
            <person name="Fabret C."/>
            <person name="Ferrari E."/>
            <person name="Foulger D."/>
            <person name="Fritz C."/>
            <person name="Fujita M."/>
            <person name="Fujita Y."/>
            <person name="Fuma S."/>
            <person name="Galizzi A."/>
            <person name="Galleron N."/>
            <person name="Ghim S.-Y."/>
            <person name="Glaser P."/>
            <person name="Goffeau A."/>
            <person name="Golightly E.J."/>
            <person name="Grandi G."/>
            <person name="Guiseppi G."/>
            <person name="Guy B.J."/>
            <person name="Haga K."/>
            <person name="Haiech J."/>
            <person name="Harwood C.R."/>
            <person name="Henaut A."/>
            <person name="Hilbert H."/>
            <person name="Holsappel S."/>
            <person name="Hosono S."/>
            <person name="Hullo M.-F."/>
            <person name="Itaya M."/>
            <person name="Jones L.-M."/>
            <person name="Joris B."/>
            <person name="Karamata D."/>
            <person name="Kasahara Y."/>
            <person name="Klaerr-Blanchard M."/>
            <person name="Klein C."/>
            <person name="Kobayashi Y."/>
            <person name="Koetter P."/>
            <person name="Koningstein G."/>
            <person name="Krogh S."/>
            <person name="Kumano M."/>
            <person name="Kurita K."/>
            <person name="Lapidus A."/>
            <person name="Lardinois S."/>
            <person name="Lauber J."/>
            <person name="Lazarevic V."/>
            <person name="Lee S.-M."/>
            <person name="Levine A."/>
            <person name="Liu H."/>
            <person name="Masuda S."/>
            <person name="Mauel C."/>
            <person name="Medigue C."/>
            <person name="Medina N."/>
            <person name="Mellado R.P."/>
            <person name="Mizuno M."/>
            <person name="Moestl D."/>
            <person name="Nakai S."/>
            <person name="Noback M."/>
            <person name="Noone D."/>
            <person name="O'Reilly M."/>
            <person name="Ogawa K."/>
            <person name="Ogiwara A."/>
            <person name="Oudega B."/>
            <person name="Park S.-H."/>
            <person name="Parro V."/>
            <person name="Pohl T.M."/>
            <person name="Portetelle D."/>
            <person name="Porwollik S."/>
            <person name="Prescott A.M."/>
            <person name="Presecan E."/>
            <person name="Pujic P."/>
            <person name="Purnelle B."/>
            <person name="Rapoport G."/>
            <person name="Rey M."/>
            <person name="Reynolds S."/>
            <person name="Rieger M."/>
            <person name="Rivolta C."/>
            <person name="Rocha E."/>
            <person name="Roche B."/>
            <person name="Rose M."/>
            <person name="Sadaie Y."/>
            <person name="Sato T."/>
            <person name="Scanlan E."/>
            <person name="Schleich S."/>
            <person name="Schroeter R."/>
            <person name="Scoffone F."/>
            <person name="Sekiguchi J."/>
            <person name="Sekowska A."/>
            <person name="Seror S.J."/>
            <person name="Serror P."/>
            <person name="Shin B.-S."/>
            <person name="Soldo B."/>
            <person name="Sorokin A."/>
            <person name="Tacconi E."/>
            <person name="Takagi T."/>
            <person name="Takahashi H."/>
            <person name="Takemaru K."/>
            <person name="Takeuchi M."/>
            <person name="Tamakoshi A."/>
            <person name="Tanaka T."/>
            <person name="Terpstra P."/>
            <person name="Tognoni A."/>
            <person name="Tosato V."/>
            <person name="Uchiyama S."/>
            <person name="Vandenbol M."/>
            <person name="Vannier F."/>
            <person name="Vassarotti A."/>
            <person name="Viari A."/>
            <person name="Wambutt R."/>
            <person name="Wedler E."/>
            <person name="Wedler H."/>
            <person name="Weitzenegger T."/>
            <person name="Winters P."/>
            <person name="Wipat A."/>
            <person name="Yamamoto H."/>
            <person name="Yamane K."/>
            <person name="Yasumoto K."/>
            <person name="Yata K."/>
            <person name="Yoshida K."/>
            <person name="Yoshikawa H.-F."/>
            <person name="Zumstein E."/>
            <person name="Yoshikawa H."/>
            <person name="Danchin A."/>
        </authorList>
    </citation>
    <scope>NUCLEOTIDE SEQUENCE [LARGE SCALE GENOMIC DNA]</scope>
    <source>
        <strain>168</strain>
    </source>
</reference>
<reference key="3">
    <citation type="journal article" date="2003" name="J. Biol. Chem.">
        <title>Characterization of yqjM, an old yellow enzyme homolog from Bacillus subtilis involved in the oxidative stress response.</title>
        <authorList>
            <person name="Fitzpatrick T.B."/>
            <person name="Amrhein N."/>
            <person name="Macheroux P."/>
        </authorList>
    </citation>
    <scope>PROTEIN SEQUENCE OF 2-11</scope>
    <scope>FUNCTION</scope>
    <scope>CATALYTIC ACTIVITY</scope>
    <scope>COFACTOR</scope>
    <scope>SUBSTRATE SPECIFICITY</scope>
    <scope>BIOPHYSICOCHEMICAL PROPERTIES</scope>
    <scope>SUBUNIT</scope>
    <scope>INDUCTION</scope>
    <source>
        <strain>168</strain>
    </source>
</reference>
<reference key="4">
    <citation type="journal article" date="2005" name="J. Biol. Chem.">
        <title>The 1.3 A crystal structure of the flavoprotein YqjM reveals a novel class of old yellow enzymes.</title>
        <authorList>
            <person name="Kitzing K."/>
            <person name="Fitzpatrick T.B."/>
            <person name="Wilken C."/>
            <person name="Sawa J."/>
            <person name="Bourenkov G.P."/>
            <person name="Macheroux P."/>
            <person name="Clausen T."/>
        </authorList>
    </citation>
    <scope>X-RAY CRYSTALLOGRAPHY (1.3 ANGSTROMS) IN COMPLEX WITH FMN AND SUBSTRATES</scope>
    <scope>SUBUNIT</scope>
</reference>
<proteinExistence type="evidence at protein level"/>
<sequence>MARKLFTPITIKDMTLKNRIVMSPMCMYSSHEKDGKLTPFHMAHYISRAIGQVGLIIVEASAVNPQGRITDQDLGIWSDEHIEGFAKLTEQVKEQGSKIGIQLAHAGRKAELEGDIFAPSAIAFDEQSATPVEMSAEKVKETVQEFKQAAARAKEAGFDVIEIHAAHGYLIHEFLSPLSNHRTDEYGGSPENRYRFLREIIDEVKQVWDGPLFVRVSASDYTDKGLDIADHIGFAKWMKEQGVDLIDCSSGALVHADINVFPGYQVSFAEKIREQADMATGAVGMITDGSMAEEILQNGRADLIFIGRELLRDPFFARTAAKQLNTEIPAPVQYERGW</sequence>
<organism>
    <name type="scientific">Bacillus subtilis (strain 168)</name>
    <dbReference type="NCBI Taxonomy" id="224308"/>
    <lineage>
        <taxon>Bacteria</taxon>
        <taxon>Bacillati</taxon>
        <taxon>Bacillota</taxon>
        <taxon>Bacilli</taxon>
        <taxon>Bacillales</taxon>
        <taxon>Bacillaceae</taxon>
        <taxon>Bacillus</taxon>
    </lineage>
</organism>
<evidence type="ECO:0000269" key="1">
    <source>
    </source>
</evidence>
<evidence type="ECO:0000269" key="2">
    <source>
    </source>
</evidence>
<evidence type="ECO:0000305" key="3"/>
<evidence type="ECO:0007829" key="4">
    <source>
        <dbReference type="PDB" id="1Z41"/>
    </source>
</evidence>
<evidence type="ECO:0007829" key="5">
    <source>
        <dbReference type="PDB" id="1Z44"/>
    </source>
</evidence>
<gene>
    <name type="primary">namA</name>
    <name type="synonym">yqjM</name>
    <name type="ordered locus">BSU23820</name>
</gene>
<accession>P54550</accession>
<keyword id="KW-0002">3D-structure</keyword>
<keyword id="KW-0216">Detoxification</keyword>
<keyword id="KW-0903">Direct protein sequencing</keyword>
<keyword id="KW-0285">Flavoprotein</keyword>
<keyword id="KW-0288">FMN</keyword>
<keyword id="KW-0521">NADP</keyword>
<keyword id="KW-0560">Oxidoreductase</keyword>
<keyword id="KW-1185">Reference proteome</keyword>
<keyword id="KW-0346">Stress response</keyword>